<dbReference type="EC" id="6.1.1.3" evidence="1"/>
<dbReference type="EMBL" id="AL935263">
    <property type="protein sequence ID" value="CCC78840.1"/>
    <property type="molecule type" value="Genomic_DNA"/>
</dbReference>
<dbReference type="RefSeq" id="WP_003644287.1">
    <property type="nucleotide sequence ID" value="NC_004567.2"/>
</dbReference>
<dbReference type="RefSeq" id="YP_004889354.1">
    <property type="nucleotide sequence ID" value="NC_004567.2"/>
</dbReference>
<dbReference type="SMR" id="Q88WU9"/>
<dbReference type="STRING" id="220668.lp_1514"/>
<dbReference type="EnsemblBacteria" id="CCC78840">
    <property type="protein sequence ID" value="CCC78840"/>
    <property type="gene ID" value="lp_1514"/>
</dbReference>
<dbReference type="KEGG" id="lpl:lp_1514"/>
<dbReference type="PATRIC" id="fig|220668.9.peg.1274"/>
<dbReference type="eggNOG" id="COG0441">
    <property type="taxonomic scope" value="Bacteria"/>
</dbReference>
<dbReference type="HOGENOM" id="CLU_008554_0_1_9"/>
<dbReference type="OrthoDB" id="9802304at2"/>
<dbReference type="PhylomeDB" id="Q88WU9"/>
<dbReference type="Proteomes" id="UP000000432">
    <property type="component" value="Chromosome"/>
</dbReference>
<dbReference type="GO" id="GO:0005737">
    <property type="term" value="C:cytoplasm"/>
    <property type="evidence" value="ECO:0007669"/>
    <property type="project" value="UniProtKB-SubCell"/>
</dbReference>
<dbReference type="GO" id="GO:0005524">
    <property type="term" value="F:ATP binding"/>
    <property type="evidence" value="ECO:0007669"/>
    <property type="project" value="UniProtKB-UniRule"/>
</dbReference>
<dbReference type="GO" id="GO:0140096">
    <property type="term" value="F:catalytic activity, acting on a protein"/>
    <property type="evidence" value="ECO:0007669"/>
    <property type="project" value="UniProtKB-ARBA"/>
</dbReference>
<dbReference type="GO" id="GO:0046872">
    <property type="term" value="F:metal ion binding"/>
    <property type="evidence" value="ECO:0007669"/>
    <property type="project" value="UniProtKB-KW"/>
</dbReference>
<dbReference type="GO" id="GO:0004829">
    <property type="term" value="F:threonine-tRNA ligase activity"/>
    <property type="evidence" value="ECO:0007669"/>
    <property type="project" value="UniProtKB-UniRule"/>
</dbReference>
<dbReference type="GO" id="GO:0016740">
    <property type="term" value="F:transferase activity"/>
    <property type="evidence" value="ECO:0007669"/>
    <property type="project" value="UniProtKB-ARBA"/>
</dbReference>
<dbReference type="GO" id="GO:0000049">
    <property type="term" value="F:tRNA binding"/>
    <property type="evidence" value="ECO:0007669"/>
    <property type="project" value="UniProtKB-KW"/>
</dbReference>
<dbReference type="GO" id="GO:0006435">
    <property type="term" value="P:threonyl-tRNA aminoacylation"/>
    <property type="evidence" value="ECO:0007669"/>
    <property type="project" value="UniProtKB-UniRule"/>
</dbReference>
<dbReference type="CDD" id="cd01667">
    <property type="entry name" value="TGS_ThrRS"/>
    <property type="match status" value="1"/>
</dbReference>
<dbReference type="CDD" id="cd00860">
    <property type="entry name" value="ThrRS_anticodon"/>
    <property type="match status" value="1"/>
</dbReference>
<dbReference type="CDD" id="cd00771">
    <property type="entry name" value="ThrRS_core"/>
    <property type="match status" value="1"/>
</dbReference>
<dbReference type="FunFam" id="3.10.20.30:FF:000005">
    <property type="entry name" value="Threonine--tRNA ligase"/>
    <property type="match status" value="1"/>
</dbReference>
<dbReference type="FunFam" id="3.30.930.10:FF:000002">
    <property type="entry name" value="Threonine--tRNA ligase"/>
    <property type="match status" value="1"/>
</dbReference>
<dbReference type="FunFam" id="3.40.50.800:FF:000001">
    <property type="entry name" value="Threonine--tRNA ligase"/>
    <property type="match status" value="1"/>
</dbReference>
<dbReference type="FunFam" id="3.30.980.10:FF:000005">
    <property type="entry name" value="Threonyl-tRNA synthetase, mitochondrial"/>
    <property type="match status" value="1"/>
</dbReference>
<dbReference type="Gene3D" id="3.10.20.30">
    <property type="match status" value="1"/>
</dbReference>
<dbReference type="Gene3D" id="3.30.54.20">
    <property type="match status" value="1"/>
</dbReference>
<dbReference type="Gene3D" id="3.40.50.800">
    <property type="entry name" value="Anticodon-binding domain"/>
    <property type="match status" value="1"/>
</dbReference>
<dbReference type="Gene3D" id="3.30.930.10">
    <property type="entry name" value="Bira Bifunctional Protein, Domain 2"/>
    <property type="match status" value="1"/>
</dbReference>
<dbReference type="Gene3D" id="3.30.980.10">
    <property type="entry name" value="Threonyl-trna Synthetase, Chain A, domain 2"/>
    <property type="match status" value="1"/>
</dbReference>
<dbReference type="HAMAP" id="MF_00184">
    <property type="entry name" value="Thr_tRNA_synth"/>
    <property type="match status" value="1"/>
</dbReference>
<dbReference type="InterPro" id="IPR002314">
    <property type="entry name" value="aa-tRNA-synt_IIb"/>
</dbReference>
<dbReference type="InterPro" id="IPR006195">
    <property type="entry name" value="aa-tRNA-synth_II"/>
</dbReference>
<dbReference type="InterPro" id="IPR045864">
    <property type="entry name" value="aa-tRNA-synth_II/BPL/LPL"/>
</dbReference>
<dbReference type="InterPro" id="IPR004154">
    <property type="entry name" value="Anticodon-bd"/>
</dbReference>
<dbReference type="InterPro" id="IPR036621">
    <property type="entry name" value="Anticodon-bd_dom_sf"/>
</dbReference>
<dbReference type="InterPro" id="IPR012675">
    <property type="entry name" value="Beta-grasp_dom_sf"/>
</dbReference>
<dbReference type="InterPro" id="IPR004095">
    <property type="entry name" value="TGS"/>
</dbReference>
<dbReference type="InterPro" id="IPR012676">
    <property type="entry name" value="TGS-like"/>
</dbReference>
<dbReference type="InterPro" id="IPR002320">
    <property type="entry name" value="Thr-tRNA-ligase_IIa"/>
</dbReference>
<dbReference type="InterPro" id="IPR018163">
    <property type="entry name" value="Thr/Ala-tRNA-synth_IIc_edit"/>
</dbReference>
<dbReference type="InterPro" id="IPR047246">
    <property type="entry name" value="ThrRS_anticodon"/>
</dbReference>
<dbReference type="InterPro" id="IPR033728">
    <property type="entry name" value="ThrRS_core"/>
</dbReference>
<dbReference type="InterPro" id="IPR012947">
    <property type="entry name" value="tRNA_SAD"/>
</dbReference>
<dbReference type="NCBIfam" id="TIGR00418">
    <property type="entry name" value="thrS"/>
    <property type="match status" value="1"/>
</dbReference>
<dbReference type="PANTHER" id="PTHR11451:SF56">
    <property type="entry name" value="THREONINE--TRNA LIGASE 1"/>
    <property type="match status" value="1"/>
</dbReference>
<dbReference type="PANTHER" id="PTHR11451">
    <property type="entry name" value="THREONINE-TRNA LIGASE"/>
    <property type="match status" value="1"/>
</dbReference>
<dbReference type="Pfam" id="PF03129">
    <property type="entry name" value="HGTP_anticodon"/>
    <property type="match status" value="1"/>
</dbReference>
<dbReference type="Pfam" id="PF02824">
    <property type="entry name" value="TGS"/>
    <property type="match status" value="1"/>
</dbReference>
<dbReference type="Pfam" id="PF00587">
    <property type="entry name" value="tRNA-synt_2b"/>
    <property type="match status" value="1"/>
</dbReference>
<dbReference type="Pfam" id="PF07973">
    <property type="entry name" value="tRNA_SAD"/>
    <property type="match status" value="1"/>
</dbReference>
<dbReference type="PRINTS" id="PR01047">
    <property type="entry name" value="TRNASYNTHTHR"/>
</dbReference>
<dbReference type="SMART" id="SM00863">
    <property type="entry name" value="tRNA_SAD"/>
    <property type="match status" value="1"/>
</dbReference>
<dbReference type="SUPFAM" id="SSF52954">
    <property type="entry name" value="Class II aaRS ABD-related"/>
    <property type="match status" value="1"/>
</dbReference>
<dbReference type="SUPFAM" id="SSF55681">
    <property type="entry name" value="Class II aaRS and biotin synthetases"/>
    <property type="match status" value="1"/>
</dbReference>
<dbReference type="SUPFAM" id="SSF81271">
    <property type="entry name" value="TGS-like"/>
    <property type="match status" value="1"/>
</dbReference>
<dbReference type="SUPFAM" id="SSF55186">
    <property type="entry name" value="ThrRS/AlaRS common domain"/>
    <property type="match status" value="1"/>
</dbReference>
<dbReference type="PROSITE" id="PS50862">
    <property type="entry name" value="AA_TRNA_LIGASE_II"/>
    <property type="match status" value="1"/>
</dbReference>
<dbReference type="PROSITE" id="PS51880">
    <property type="entry name" value="TGS"/>
    <property type="match status" value="1"/>
</dbReference>
<evidence type="ECO:0000255" key="1">
    <source>
        <dbReference type="HAMAP-Rule" id="MF_00184"/>
    </source>
</evidence>
<evidence type="ECO:0000255" key="2">
    <source>
        <dbReference type="PROSITE-ProRule" id="PRU01228"/>
    </source>
</evidence>
<accession>Q88WU9</accession>
<accession>F9UNQ1</accession>
<proteinExistence type="inferred from homology"/>
<gene>
    <name evidence="1" type="primary">thrS</name>
    <name type="ordered locus">lp_1514</name>
</gene>
<reference key="1">
    <citation type="journal article" date="2003" name="Proc. Natl. Acad. Sci. U.S.A.">
        <title>Complete genome sequence of Lactobacillus plantarum WCFS1.</title>
        <authorList>
            <person name="Kleerebezem M."/>
            <person name="Boekhorst J."/>
            <person name="van Kranenburg R."/>
            <person name="Molenaar D."/>
            <person name="Kuipers O.P."/>
            <person name="Leer R."/>
            <person name="Tarchini R."/>
            <person name="Peters S.A."/>
            <person name="Sandbrink H.M."/>
            <person name="Fiers M.W.E.J."/>
            <person name="Stiekema W."/>
            <person name="Klein Lankhorst R.M."/>
            <person name="Bron P.A."/>
            <person name="Hoffer S.M."/>
            <person name="Nierop Groot M.N."/>
            <person name="Kerkhoven R."/>
            <person name="De Vries M."/>
            <person name="Ursing B."/>
            <person name="De Vos W.M."/>
            <person name="Siezen R.J."/>
        </authorList>
    </citation>
    <scope>NUCLEOTIDE SEQUENCE [LARGE SCALE GENOMIC DNA]</scope>
    <source>
        <strain>ATCC BAA-793 / NCIMB 8826 / WCFS1</strain>
    </source>
</reference>
<reference key="2">
    <citation type="journal article" date="2012" name="J. Bacteriol.">
        <title>Complete resequencing and reannotation of the Lactobacillus plantarum WCFS1 genome.</title>
        <authorList>
            <person name="Siezen R.J."/>
            <person name="Francke C."/>
            <person name="Renckens B."/>
            <person name="Boekhorst J."/>
            <person name="Wels M."/>
            <person name="Kleerebezem M."/>
            <person name="van Hijum S.A."/>
        </authorList>
    </citation>
    <scope>NUCLEOTIDE SEQUENCE [LARGE SCALE GENOMIC DNA]</scope>
    <scope>GENOME REANNOTATION</scope>
    <source>
        <strain>ATCC BAA-793 / NCIMB 8826 / WCFS1</strain>
    </source>
</reference>
<comment type="function">
    <text evidence="1">Catalyzes the attachment of threonine to tRNA(Thr) in a two-step reaction: L-threonine is first activated by ATP to form Thr-AMP and then transferred to the acceptor end of tRNA(Thr). Also edits incorrectly charged L-seryl-tRNA(Thr).</text>
</comment>
<comment type="catalytic activity">
    <reaction evidence="1">
        <text>tRNA(Thr) + L-threonine + ATP = L-threonyl-tRNA(Thr) + AMP + diphosphate + H(+)</text>
        <dbReference type="Rhea" id="RHEA:24624"/>
        <dbReference type="Rhea" id="RHEA-COMP:9670"/>
        <dbReference type="Rhea" id="RHEA-COMP:9704"/>
        <dbReference type="ChEBI" id="CHEBI:15378"/>
        <dbReference type="ChEBI" id="CHEBI:30616"/>
        <dbReference type="ChEBI" id="CHEBI:33019"/>
        <dbReference type="ChEBI" id="CHEBI:57926"/>
        <dbReference type="ChEBI" id="CHEBI:78442"/>
        <dbReference type="ChEBI" id="CHEBI:78534"/>
        <dbReference type="ChEBI" id="CHEBI:456215"/>
        <dbReference type="EC" id="6.1.1.3"/>
    </reaction>
</comment>
<comment type="cofactor">
    <cofactor evidence="1">
        <name>Zn(2+)</name>
        <dbReference type="ChEBI" id="CHEBI:29105"/>
    </cofactor>
    <text evidence="1">Binds 1 zinc ion per subunit.</text>
</comment>
<comment type="subunit">
    <text evidence="1">Homodimer.</text>
</comment>
<comment type="subcellular location">
    <subcellularLocation>
        <location evidence="1">Cytoplasm</location>
    </subcellularLocation>
</comment>
<comment type="similarity">
    <text evidence="1">Belongs to the class-II aminoacyl-tRNA synthetase family.</text>
</comment>
<feature type="chain" id="PRO_0000100995" description="Threonine--tRNA ligase">
    <location>
        <begin position="1"/>
        <end position="654"/>
    </location>
</feature>
<feature type="domain" description="TGS" evidence="2">
    <location>
        <begin position="1"/>
        <end position="63"/>
    </location>
</feature>
<feature type="region of interest" description="Catalytic" evidence="1">
    <location>
        <begin position="248"/>
        <end position="546"/>
    </location>
</feature>
<feature type="binding site" evidence="1">
    <location>
        <position position="342"/>
    </location>
    <ligand>
        <name>Zn(2+)</name>
        <dbReference type="ChEBI" id="CHEBI:29105"/>
    </ligand>
</feature>
<feature type="binding site" evidence="1">
    <location>
        <position position="393"/>
    </location>
    <ligand>
        <name>Zn(2+)</name>
        <dbReference type="ChEBI" id="CHEBI:29105"/>
    </ligand>
</feature>
<feature type="binding site" evidence="1">
    <location>
        <position position="523"/>
    </location>
    <ligand>
        <name>Zn(2+)</name>
        <dbReference type="ChEBI" id="CHEBI:29105"/>
    </ligand>
</feature>
<name>SYT_LACPL</name>
<sequence length="654" mass="73819">MASINVKFPDGAEKQFDAGVTTEAIAKSISPSLAKRSVAGKFNDQIVDYRQPLTTDGSIEIIAADSEDGLNVLRQTAAQVLANAVKQLFPNIHFGSGEGNANGFFFDTDNPDEDGKQVSEDDLEAISDKMAAIIKQDLPIEREVLSKADALALVGDNPYQQDLVNERAAANNDQVVVYKQGDFVDLSDGAQLASTGKVKVFKLLSVAGAYWQGKSSNPMLQRIYGTAFLKQKDLDADLKRRQEARERDHRVIGNELDLFFVDPKVGNGLPYWMPNGATIRRQIERYIIDKEVANGYQHVYTPVLANLDVYKQSGHWDHYREDMFPPMDMGDGEQLELRPMNCPSHIQIYNHHIRSYRELPLRIAELGMMHRYEKSGALTGLSRVREMTLNDGHTFVALDQIEEEFKKILSLMVEVYEDFDISDYRFRLSYRDPENKEKYFDDDAMWERSQKMLKSAMDDMGLDYFEAEGEAAFYGPKLDVQTKTALGGEETLSTIQLDFLLPERFDLKYVGADGEEHRPVMIHRGLVSTMERFVAYLTEIYKGAFPTWLAPKQVTIIPVNNGAHGAYAETVRRRLAAEGVRVSIDDRNEKMGYKIRESQTKKVPYLLVVGDQEVANGSVSVRKYGEERTESEAVDMFIGAITQEIKHYSRGASK</sequence>
<protein>
    <recommendedName>
        <fullName evidence="1">Threonine--tRNA ligase</fullName>
        <ecNumber evidence="1">6.1.1.3</ecNumber>
    </recommendedName>
    <alternativeName>
        <fullName evidence="1">Threonyl-tRNA synthetase</fullName>
        <shortName evidence="1">ThrRS</shortName>
    </alternativeName>
</protein>
<keyword id="KW-0030">Aminoacyl-tRNA synthetase</keyword>
<keyword id="KW-0067">ATP-binding</keyword>
<keyword id="KW-0963">Cytoplasm</keyword>
<keyword id="KW-0436">Ligase</keyword>
<keyword id="KW-0479">Metal-binding</keyword>
<keyword id="KW-0547">Nucleotide-binding</keyword>
<keyword id="KW-0648">Protein biosynthesis</keyword>
<keyword id="KW-1185">Reference proteome</keyword>
<keyword id="KW-0694">RNA-binding</keyword>
<keyword id="KW-0820">tRNA-binding</keyword>
<keyword id="KW-0862">Zinc</keyword>
<organism>
    <name type="scientific">Lactiplantibacillus plantarum (strain ATCC BAA-793 / NCIMB 8826 / WCFS1)</name>
    <name type="common">Lactobacillus plantarum</name>
    <dbReference type="NCBI Taxonomy" id="220668"/>
    <lineage>
        <taxon>Bacteria</taxon>
        <taxon>Bacillati</taxon>
        <taxon>Bacillota</taxon>
        <taxon>Bacilli</taxon>
        <taxon>Lactobacillales</taxon>
        <taxon>Lactobacillaceae</taxon>
        <taxon>Lactiplantibacillus</taxon>
    </lineage>
</organism>